<protein>
    <recommendedName>
        <fullName evidence="1">6,7-dimethyl-8-ribityllumazine synthase</fullName>
        <shortName evidence="1">DMRL synthase</shortName>
        <shortName evidence="1">LS</shortName>
        <shortName evidence="1">Lumazine synthase</shortName>
        <ecNumber evidence="1">2.5.1.78</ecNumber>
    </recommendedName>
</protein>
<accession>A9R2J8</accession>
<name>RISB_YERPG</name>
<gene>
    <name evidence="1" type="primary">ribH</name>
    <name type="ordered locus">YpAngola_A3164</name>
</gene>
<reference key="1">
    <citation type="journal article" date="2010" name="J. Bacteriol.">
        <title>Genome sequence of the deep-rooted Yersinia pestis strain Angola reveals new insights into the evolution and pangenome of the plague bacterium.</title>
        <authorList>
            <person name="Eppinger M."/>
            <person name="Worsham P.L."/>
            <person name="Nikolich M.P."/>
            <person name="Riley D.R."/>
            <person name="Sebastian Y."/>
            <person name="Mou S."/>
            <person name="Achtman M."/>
            <person name="Lindler L.E."/>
            <person name="Ravel J."/>
        </authorList>
    </citation>
    <scope>NUCLEOTIDE SEQUENCE [LARGE SCALE GENOMIC DNA]</scope>
    <source>
        <strain>Angola</strain>
    </source>
</reference>
<proteinExistence type="inferred from homology"/>
<feature type="chain" id="PRO_1000098256" description="6,7-dimethyl-8-ribityllumazine synthase">
    <location>
        <begin position="1"/>
        <end position="156"/>
    </location>
</feature>
<feature type="active site" description="Proton donor" evidence="1">
    <location>
        <position position="89"/>
    </location>
</feature>
<feature type="binding site" evidence="1">
    <location>
        <position position="22"/>
    </location>
    <ligand>
        <name>5-amino-6-(D-ribitylamino)uracil</name>
        <dbReference type="ChEBI" id="CHEBI:15934"/>
    </ligand>
</feature>
<feature type="binding site" evidence="1">
    <location>
        <begin position="57"/>
        <end position="59"/>
    </location>
    <ligand>
        <name>5-amino-6-(D-ribitylamino)uracil</name>
        <dbReference type="ChEBI" id="CHEBI:15934"/>
    </ligand>
</feature>
<feature type="binding site" evidence="1">
    <location>
        <begin position="81"/>
        <end position="83"/>
    </location>
    <ligand>
        <name>5-amino-6-(D-ribitylamino)uracil</name>
        <dbReference type="ChEBI" id="CHEBI:15934"/>
    </ligand>
</feature>
<feature type="binding site" evidence="1">
    <location>
        <begin position="86"/>
        <end position="87"/>
    </location>
    <ligand>
        <name>(2S)-2-hydroxy-3-oxobutyl phosphate</name>
        <dbReference type="ChEBI" id="CHEBI:58830"/>
    </ligand>
</feature>
<feature type="binding site" evidence="1">
    <location>
        <position position="114"/>
    </location>
    <ligand>
        <name>5-amino-6-(D-ribitylamino)uracil</name>
        <dbReference type="ChEBI" id="CHEBI:15934"/>
    </ligand>
</feature>
<feature type="binding site" evidence="1">
    <location>
        <position position="128"/>
    </location>
    <ligand>
        <name>(2S)-2-hydroxy-3-oxobutyl phosphate</name>
        <dbReference type="ChEBI" id="CHEBI:58830"/>
    </ligand>
</feature>
<evidence type="ECO:0000255" key="1">
    <source>
        <dbReference type="HAMAP-Rule" id="MF_00178"/>
    </source>
</evidence>
<organism>
    <name type="scientific">Yersinia pestis bv. Antiqua (strain Angola)</name>
    <dbReference type="NCBI Taxonomy" id="349746"/>
    <lineage>
        <taxon>Bacteria</taxon>
        <taxon>Pseudomonadati</taxon>
        <taxon>Pseudomonadota</taxon>
        <taxon>Gammaproteobacteria</taxon>
        <taxon>Enterobacterales</taxon>
        <taxon>Yersiniaceae</taxon>
        <taxon>Yersinia</taxon>
    </lineage>
</organism>
<comment type="function">
    <text evidence="1">Catalyzes the formation of 6,7-dimethyl-8-ribityllumazine by condensation of 5-amino-6-(D-ribitylamino)uracil with 3,4-dihydroxy-2-butanone 4-phosphate. This is the penultimate step in the biosynthesis of riboflavin.</text>
</comment>
<comment type="catalytic activity">
    <reaction evidence="1">
        <text>(2S)-2-hydroxy-3-oxobutyl phosphate + 5-amino-6-(D-ribitylamino)uracil = 6,7-dimethyl-8-(1-D-ribityl)lumazine + phosphate + 2 H2O + H(+)</text>
        <dbReference type="Rhea" id="RHEA:26152"/>
        <dbReference type="ChEBI" id="CHEBI:15377"/>
        <dbReference type="ChEBI" id="CHEBI:15378"/>
        <dbReference type="ChEBI" id="CHEBI:15934"/>
        <dbReference type="ChEBI" id="CHEBI:43474"/>
        <dbReference type="ChEBI" id="CHEBI:58201"/>
        <dbReference type="ChEBI" id="CHEBI:58830"/>
        <dbReference type="EC" id="2.5.1.78"/>
    </reaction>
</comment>
<comment type="pathway">
    <text evidence="1">Cofactor biosynthesis; riboflavin biosynthesis; riboflavin from 2-hydroxy-3-oxobutyl phosphate and 5-amino-6-(D-ribitylamino)uracil: step 1/2.</text>
</comment>
<comment type="subunit">
    <text evidence="1">Forms an icosahedral capsid composed of 60 subunits, arranged as a dodecamer of pentamers.</text>
</comment>
<comment type="similarity">
    <text evidence="1">Belongs to the DMRL synthase family.</text>
</comment>
<dbReference type="EC" id="2.5.1.78" evidence="1"/>
<dbReference type="EMBL" id="CP000901">
    <property type="protein sequence ID" value="ABX88125.1"/>
    <property type="molecule type" value="Genomic_DNA"/>
</dbReference>
<dbReference type="SMR" id="A9R2J8"/>
<dbReference type="KEGG" id="ypg:YpAngola_A3164"/>
<dbReference type="PATRIC" id="fig|349746.12.peg.4223"/>
<dbReference type="UniPathway" id="UPA00275">
    <property type="reaction ID" value="UER00404"/>
</dbReference>
<dbReference type="GO" id="GO:0005829">
    <property type="term" value="C:cytosol"/>
    <property type="evidence" value="ECO:0007669"/>
    <property type="project" value="TreeGrafter"/>
</dbReference>
<dbReference type="GO" id="GO:0009349">
    <property type="term" value="C:riboflavin synthase complex"/>
    <property type="evidence" value="ECO:0007669"/>
    <property type="project" value="InterPro"/>
</dbReference>
<dbReference type="GO" id="GO:0000906">
    <property type="term" value="F:6,7-dimethyl-8-ribityllumazine synthase activity"/>
    <property type="evidence" value="ECO:0007669"/>
    <property type="project" value="UniProtKB-UniRule"/>
</dbReference>
<dbReference type="GO" id="GO:0009231">
    <property type="term" value="P:riboflavin biosynthetic process"/>
    <property type="evidence" value="ECO:0007669"/>
    <property type="project" value="UniProtKB-UniRule"/>
</dbReference>
<dbReference type="CDD" id="cd09209">
    <property type="entry name" value="Lumazine_synthase-I"/>
    <property type="match status" value="1"/>
</dbReference>
<dbReference type="FunFam" id="3.40.50.960:FF:000001">
    <property type="entry name" value="6,7-dimethyl-8-ribityllumazine synthase"/>
    <property type="match status" value="1"/>
</dbReference>
<dbReference type="Gene3D" id="3.40.50.960">
    <property type="entry name" value="Lumazine/riboflavin synthase"/>
    <property type="match status" value="1"/>
</dbReference>
<dbReference type="HAMAP" id="MF_00178">
    <property type="entry name" value="Lumazine_synth"/>
    <property type="match status" value="1"/>
</dbReference>
<dbReference type="InterPro" id="IPR034964">
    <property type="entry name" value="LS"/>
</dbReference>
<dbReference type="InterPro" id="IPR002180">
    <property type="entry name" value="LS/RS"/>
</dbReference>
<dbReference type="InterPro" id="IPR036467">
    <property type="entry name" value="LS/RS_sf"/>
</dbReference>
<dbReference type="NCBIfam" id="TIGR00114">
    <property type="entry name" value="lumazine-synth"/>
    <property type="match status" value="1"/>
</dbReference>
<dbReference type="NCBIfam" id="NF000812">
    <property type="entry name" value="PRK00061.1-4"/>
    <property type="match status" value="1"/>
</dbReference>
<dbReference type="PANTHER" id="PTHR21058:SF0">
    <property type="entry name" value="6,7-DIMETHYL-8-RIBITYLLUMAZINE SYNTHASE"/>
    <property type="match status" value="1"/>
</dbReference>
<dbReference type="PANTHER" id="PTHR21058">
    <property type="entry name" value="6,7-DIMETHYL-8-RIBITYLLUMAZINE SYNTHASE DMRL SYNTHASE LUMAZINE SYNTHASE"/>
    <property type="match status" value="1"/>
</dbReference>
<dbReference type="Pfam" id="PF00885">
    <property type="entry name" value="DMRL_synthase"/>
    <property type="match status" value="1"/>
</dbReference>
<dbReference type="SUPFAM" id="SSF52121">
    <property type="entry name" value="Lumazine synthase"/>
    <property type="match status" value="1"/>
</dbReference>
<keyword id="KW-0686">Riboflavin biosynthesis</keyword>
<keyword id="KW-0808">Transferase</keyword>
<sequence>MNVIEGVVATPNARVAIAIARFNNFINDSLLDGAIDALKRIGQVSDDNITVVWVPGAYELPLVANVLAKTNRYDAVIALGTVIRGGTAHFEYVAGEASSGLSSVAMNSDIPVAFGVLTTESIEQAIERAGTKAGNKGAEAALTALEMINVIKAIKG</sequence>